<comment type="function">
    <text evidence="2">Alpha toxins bind voltage-independently at site-3 of sodium channels (Nav) and inhibit the inactivation of the activated channels, thereby blocking neuronal transmission. This toxin is active on both mammals and insects. It can be considered as a cardiotoxin, as it can bind to human cardiac sodium channel and modify its normal properties.</text>
</comment>
<comment type="subcellular location">
    <subcellularLocation>
        <location>Secreted</location>
    </subcellularLocation>
</comment>
<comment type="tissue specificity">
    <text>Expressed by the venom gland.</text>
</comment>
<comment type="domain">
    <text evidence="4">Has the structural arrangement of an alpha-helix connected to antiparallel beta-sheets by disulfide bonds (CS-alpha/beta).</text>
</comment>
<comment type="mass spectrometry"/>
<comment type="miscellaneous">
    <text>Exists in two forms, due to cis-trans isomerization at 9-Pro-His-10.</text>
</comment>
<comment type="similarity">
    <text evidence="4">Belongs to the long (4 C-C) scorpion toxin superfamily. Sodium channel inhibitor family. Alpha subfamily.</text>
</comment>
<accession>P59854</accession>
<proteinExistence type="evidence at protein level"/>
<sequence>VRDGYIALPHNCAYGCLNNEYCNNLCTKDGAKIGYCNIVGKYGNACWCIQLPDNVPIRVPGRCHPA</sequence>
<name>SCX7_OLIMR</name>
<organism>
    <name type="scientific">Olivierus martensii</name>
    <name type="common">Manchurian scorpion</name>
    <name type="synonym">Mesobuthus martensii</name>
    <dbReference type="NCBI Taxonomy" id="34649"/>
    <lineage>
        <taxon>Eukaryota</taxon>
        <taxon>Metazoa</taxon>
        <taxon>Ecdysozoa</taxon>
        <taxon>Arthropoda</taxon>
        <taxon>Chelicerata</taxon>
        <taxon>Arachnida</taxon>
        <taxon>Scorpiones</taxon>
        <taxon>Buthida</taxon>
        <taxon>Buthoidea</taxon>
        <taxon>Buthidae</taxon>
        <taxon>Olivierus</taxon>
    </lineage>
</organism>
<reference key="1">
    <citation type="journal article" date="2004" name="J. Mol. Biol.">
        <title>Structural mechanism governing cis and trans isomeric states and an intramolecular switch for cis/trans isomerization of a non-proline peptide bond observed in crystal structures of scorpion toxins.</title>
        <authorList>
            <person name="Guan R.-J."/>
            <person name="Xiang Y."/>
            <person name="He X.-L."/>
            <person name="Wang C.-G."/>
            <person name="Wang M."/>
            <person name="Zhang Y."/>
            <person name="Sundberg E.J."/>
            <person name="Wang D.-C."/>
        </authorList>
    </citation>
    <scope>PROTEIN SEQUENCE</scope>
    <scope>X-RAY CRYSTALLOGRAPHY (1.4 ANGSTROMS)</scope>
    <scope>MASS SPECTROMETRY</scope>
</reference>
<reference key="2">
    <citation type="journal article" date="2002" name="Protein Pept. Lett.">
        <title>Purification, crystallization and initial structural solution of a new alpha-like toxin with cardiac toxicity from scorpion Buthus martensii Karsch.</title>
        <authorList>
            <person name="Guan R.-J."/>
            <person name="He X.-L."/>
            <person name="Wang M."/>
            <person name="Ye X."/>
            <person name="Li G.-P."/>
            <person name="Wang D.-C."/>
        </authorList>
    </citation>
    <scope>FUNCTION</scope>
    <scope>CRYSTALLIZATION</scope>
    <source>
        <tissue>Venom</tissue>
    </source>
</reference>
<evidence type="ECO:0000255" key="1">
    <source>
        <dbReference type="PROSITE-ProRule" id="PRU01210"/>
    </source>
</evidence>
<evidence type="ECO:0000269" key="2">
    <source>
    </source>
</evidence>
<evidence type="ECO:0000269" key="3">
    <source>
    </source>
</evidence>
<evidence type="ECO:0000305" key="4"/>
<evidence type="ECO:0007829" key="5">
    <source>
        <dbReference type="PDB" id="1KV0"/>
    </source>
</evidence>
<keyword id="KW-0002">3D-structure</keyword>
<keyword id="KW-0903">Direct protein sequencing</keyword>
<keyword id="KW-1015">Disulfide bond</keyword>
<keyword id="KW-0872">Ion channel impairing toxin</keyword>
<keyword id="KW-0528">Neurotoxin</keyword>
<keyword id="KW-0964">Secreted</keyword>
<keyword id="KW-0800">Toxin</keyword>
<keyword id="KW-0738">Voltage-gated sodium channel impairing toxin</keyword>
<protein>
    <recommendedName>
        <fullName>Alpha-like toxin BmK-M7</fullName>
        <shortName>BmKM7</shortName>
        <shortName>Bmk M7</shortName>
    </recommendedName>
</protein>
<feature type="chain" id="PRO_0000066752" description="Alpha-like toxin BmK-M7">
    <location>
        <begin position="1"/>
        <end position="66"/>
    </location>
</feature>
<feature type="domain" description="LCN-type CS-alpha/beta" evidence="1">
    <location>
        <begin position="2"/>
        <end position="64"/>
    </location>
</feature>
<feature type="disulfide bond" evidence="1">
    <location>
        <begin position="12"/>
        <end position="63"/>
    </location>
</feature>
<feature type="disulfide bond" evidence="1">
    <location>
        <begin position="16"/>
        <end position="36"/>
    </location>
</feature>
<feature type="disulfide bond" evidence="1">
    <location>
        <begin position="22"/>
        <end position="46"/>
    </location>
</feature>
<feature type="disulfide bond" evidence="1">
    <location>
        <begin position="26"/>
        <end position="48"/>
    </location>
</feature>
<feature type="strand" evidence="5">
    <location>
        <begin position="2"/>
        <end position="8"/>
    </location>
</feature>
<feature type="turn" evidence="5">
    <location>
        <begin position="9"/>
        <end position="11"/>
    </location>
</feature>
<feature type="helix" evidence="5">
    <location>
        <begin position="19"/>
        <end position="28"/>
    </location>
</feature>
<feature type="strand" evidence="5">
    <location>
        <begin position="32"/>
        <end position="38"/>
    </location>
</feature>
<feature type="strand" evidence="5">
    <location>
        <begin position="40"/>
        <end position="51"/>
    </location>
</feature>
<dbReference type="PDB" id="1KV0">
    <property type="method" value="X-ray"/>
    <property type="resolution" value="1.40 A"/>
    <property type="chains" value="A/B=1-66"/>
</dbReference>
<dbReference type="PDBsum" id="1KV0"/>
<dbReference type="SMR" id="P59854"/>
<dbReference type="EvolutionaryTrace" id="P59854"/>
<dbReference type="GO" id="GO:0005576">
    <property type="term" value="C:extracellular region"/>
    <property type="evidence" value="ECO:0007669"/>
    <property type="project" value="UniProtKB-SubCell"/>
</dbReference>
<dbReference type="GO" id="GO:0019871">
    <property type="term" value="F:sodium channel inhibitor activity"/>
    <property type="evidence" value="ECO:0007669"/>
    <property type="project" value="InterPro"/>
</dbReference>
<dbReference type="GO" id="GO:0090729">
    <property type="term" value="F:toxin activity"/>
    <property type="evidence" value="ECO:0007669"/>
    <property type="project" value="UniProtKB-KW"/>
</dbReference>
<dbReference type="GO" id="GO:0006952">
    <property type="term" value="P:defense response"/>
    <property type="evidence" value="ECO:0007669"/>
    <property type="project" value="InterPro"/>
</dbReference>
<dbReference type="CDD" id="cd23106">
    <property type="entry name" value="neurotoxins_LC_scorpion"/>
    <property type="match status" value="1"/>
</dbReference>
<dbReference type="FunFam" id="3.30.30.10:FF:000002">
    <property type="entry name" value="Alpha-like toxin BmK-M1"/>
    <property type="match status" value="1"/>
</dbReference>
<dbReference type="Gene3D" id="3.30.30.10">
    <property type="entry name" value="Knottin, scorpion toxin-like"/>
    <property type="match status" value="1"/>
</dbReference>
<dbReference type="InterPro" id="IPR044062">
    <property type="entry name" value="LCN-type_CS_alpha_beta_dom"/>
</dbReference>
<dbReference type="InterPro" id="IPR003614">
    <property type="entry name" value="Scorpion_toxin-like"/>
</dbReference>
<dbReference type="InterPro" id="IPR036574">
    <property type="entry name" value="Scorpion_toxin-like_sf"/>
</dbReference>
<dbReference type="InterPro" id="IPR018218">
    <property type="entry name" value="Scorpion_toxinL"/>
</dbReference>
<dbReference type="InterPro" id="IPR002061">
    <property type="entry name" value="Scorpion_toxinL/defensin"/>
</dbReference>
<dbReference type="Pfam" id="PF00537">
    <property type="entry name" value="Toxin_3"/>
    <property type="match status" value="1"/>
</dbReference>
<dbReference type="PRINTS" id="PR00285">
    <property type="entry name" value="SCORPNTOXIN"/>
</dbReference>
<dbReference type="SMART" id="SM00505">
    <property type="entry name" value="Knot1"/>
    <property type="match status" value="1"/>
</dbReference>
<dbReference type="SUPFAM" id="SSF57095">
    <property type="entry name" value="Scorpion toxin-like"/>
    <property type="match status" value="1"/>
</dbReference>
<dbReference type="PROSITE" id="PS51863">
    <property type="entry name" value="LCN_CSAB"/>
    <property type="match status" value="1"/>
</dbReference>